<feature type="chain" id="PRO_1000083595" description="Cobalt-precorrin-5B C(1)-methyltransferase">
    <location>
        <begin position="1"/>
        <end position="379"/>
    </location>
</feature>
<evidence type="ECO:0000255" key="1">
    <source>
        <dbReference type="HAMAP-Rule" id="MF_00787"/>
    </source>
</evidence>
<reference key="1">
    <citation type="submission" date="2007-11" db="EMBL/GenBank/DDBJ databases">
        <authorList>
            <consortium name="The Salmonella enterica serovar Arizonae Genome Sequencing Project"/>
            <person name="McClelland M."/>
            <person name="Sanderson E.K."/>
            <person name="Porwollik S."/>
            <person name="Spieth J."/>
            <person name="Clifton W.S."/>
            <person name="Fulton R."/>
            <person name="Chunyan W."/>
            <person name="Wollam A."/>
            <person name="Shah N."/>
            <person name="Pepin K."/>
            <person name="Bhonagiri V."/>
            <person name="Nash W."/>
            <person name="Johnson M."/>
            <person name="Thiruvilangam P."/>
            <person name="Wilson R."/>
        </authorList>
    </citation>
    <scope>NUCLEOTIDE SEQUENCE [LARGE SCALE GENOMIC DNA]</scope>
    <source>
        <strain>ATCC BAA-731 / CDC346-86 / RSK2980</strain>
    </source>
</reference>
<comment type="function">
    <text evidence="1">Catalyzes the methylation of C-1 in cobalt-precorrin-5B to form cobalt-precorrin-6A.</text>
</comment>
<comment type="catalytic activity">
    <reaction evidence="1">
        <text>Co-precorrin-5B + S-adenosyl-L-methionine = Co-precorrin-6A + S-adenosyl-L-homocysteine</text>
        <dbReference type="Rhea" id="RHEA:26285"/>
        <dbReference type="ChEBI" id="CHEBI:57856"/>
        <dbReference type="ChEBI" id="CHEBI:59789"/>
        <dbReference type="ChEBI" id="CHEBI:60063"/>
        <dbReference type="ChEBI" id="CHEBI:60064"/>
        <dbReference type="EC" id="2.1.1.195"/>
    </reaction>
</comment>
<comment type="pathway">
    <text evidence="1">Cofactor biosynthesis; adenosylcobalamin biosynthesis; cob(II)yrinate a,c-diamide from sirohydrochlorin (anaerobic route): step 6/10.</text>
</comment>
<comment type="similarity">
    <text evidence="1">Belongs to the CbiD family.</text>
</comment>
<proteinExistence type="inferred from homology"/>
<organism>
    <name type="scientific">Salmonella arizonae (strain ATCC BAA-731 / CDC346-86 / RSK2980)</name>
    <dbReference type="NCBI Taxonomy" id="41514"/>
    <lineage>
        <taxon>Bacteria</taxon>
        <taxon>Pseudomonadati</taxon>
        <taxon>Pseudomonadota</taxon>
        <taxon>Gammaproteobacteria</taxon>
        <taxon>Enterobacterales</taxon>
        <taxon>Enterobacteriaceae</taxon>
        <taxon>Salmonella</taxon>
    </lineage>
</organism>
<name>CBID_SALAR</name>
<protein>
    <recommendedName>
        <fullName evidence="1">Cobalt-precorrin-5B C(1)-methyltransferase</fullName>
        <ecNumber evidence="1">2.1.1.195</ecNumber>
    </recommendedName>
    <alternativeName>
        <fullName evidence="1">Cobalt-precorrin-6A synthase</fullName>
    </alternativeName>
</protein>
<accession>A9MLR2</accession>
<sequence length="379" mass="40884">MSELSFDAPVWHHGKALRKGYTTGSCATAAAKVAALMVLRQHLIHQVSIVTPSGVTLCLNVESPHIEGQQAIAAIRKDGGDDVDATHGMLIFARVTLNDSGEITLTGGEGIGTVTRKGVGLPLGSAAINRTPRHTIESAVREAIGPARGADVEIFAPEGEARAQKTYNSRLGILGGISIIGTTGIVTPMSEESWKRSLSLELEIKRASGLMRVILVPGNHGERFVREQMGVDTQAVVTMSNFVGYMIEEAVRLGFRQIVLVGHPGKLIKIAAGIFHTHSHIADARMETLVAHLALLGAPLELLTLVGDCDTTEAAMEHIEAYGFGHIYNHLAKRICWRVMQMLRFTKTPPVCDAILFSFDNHILGSNRPVDEIAKELQC</sequence>
<dbReference type="EC" id="2.1.1.195" evidence="1"/>
<dbReference type="EMBL" id="CP000880">
    <property type="protein sequence ID" value="ABX20775.1"/>
    <property type="molecule type" value="Genomic_DNA"/>
</dbReference>
<dbReference type="SMR" id="A9MLR2"/>
<dbReference type="STRING" id="41514.SARI_00856"/>
<dbReference type="KEGG" id="ses:SARI_00856"/>
<dbReference type="HOGENOM" id="CLU_041273_1_0_6"/>
<dbReference type="UniPathway" id="UPA00148">
    <property type="reaction ID" value="UER00227"/>
</dbReference>
<dbReference type="Proteomes" id="UP000002084">
    <property type="component" value="Chromosome"/>
</dbReference>
<dbReference type="GO" id="GO:0043780">
    <property type="term" value="F:cobalt-precorrin-5B C1-methyltransferase activity"/>
    <property type="evidence" value="ECO:0007669"/>
    <property type="project" value="RHEA"/>
</dbReference>
<dbReference type="GO" id="GO:0019251">
    <property type="term" value="P:anaerobic cobalamin biosynthetic process"/>
    <property type="evidence" value="ECO:0007669"/>
    <property type="project" value="UniProtKB-UniRule"/>
</dbReference>
<dbReference type="GO" id="GO:0032259">
    <property type="term" value="P:methylation"/>
    <property type="evidence" value="ECO:0007669"/>
    <property type="project" value="UniProtKB-KW"/>
</dbReference>
<dbReference type="Gene3D" id="3.30.2110.10">
    <property type="entry name" value="CbiD-like"/>
    <property type="match status" value="1"/>
</dbReference>
<dbReference type="HAMAP" id="MF_00787">
    <property type="entry name" value="CbiD"/>
    <property type="match status" value="1"/>
</dbReference>
<dbReference type="InterPro" id="IPR002748">
    <property type="entry name" value="CbiD"/>
</dbReference>
<dbReference type="InterPro" id="IPR036074">
    <property type="entry name" value="CbiD_sf"/>
</dbReference>
<dbReference type="NCBIfam" id="TIGR00312">
    <property type="entry name" value="cbiD"/>
    <property type="match status" value="1"/>
</dbReference>
<dbReference type="PANTHER" id="PTHR35863">
    <property type="entry name" value="COBALT-PRECORRIN-5B C(1)-METHYLTRANSFERASE"/>
    <property type="match status" value="1"/>
</dbReference>
<dbReference type="PANTHER" id="PTHR35863:SF1">
    <property type="entry name" value="COBALT-PRECORRIN-5B C(1)-METHYLTRANSFERASE"/>
    <property type="match status" value="1"/>
</dbReference>
<dbReference type="Pfam" id="PF01888">
    <property type="entry name" value="CbiD"/>
    <property type="match status" value="1"/>
</dbReference>
<dbReference type="PIRSF" id="PIRSF026782">
    <property type="entry name" value="CbiD"/>
    <property type="match status" value="1"/>
</dbReference>
<dbReference type="SUPFAM" id="SSF111342">
    <property type="entry name" value="CbiD-like"/>
    <property type="match status" value="1"/>
</dbReference>
<gene>
    <name evidence="1" type="primary">cbiD</name>
    <name type="ordered locus">SARI_00856</name>
</gene>
<keyword id="KW-0169">Cobalamin biosynthesis</keyword>
<keyword id="KW-0489">Methyltransferase</keyword>
<keyword id="KW-1185">Reference proteome</keyword>
<keyword id="KW-0949">S-adenosyl-L-methionine</keyword>
<keyword id="KW-0808">Transferase</keyword>